<sequence length="466" mass="50942">MGQKNHFDVIVIGSGPGGEGAAMGLTKGGKNVAIIEKESSVGGGCTHWGTIPSKALRHAVSRIIEFNSNPLFCKNNSSIHATFSTILSHAKSVIDKQTRLRQGFYDRNQCTLIFGAAHFIDAHTVAVKKADGSIDTYSADKFVIATGSRPYHPKDVDFGHPRIYDSDSILNLEHDPRHIIIYGAGVIGCEYASIFRGLDVKTDLINTRDRLLSFLDNEVSDALSYHFWNSGVVIRNDETYDKVEGTSDGVIVHLKSGKKMRADCLLYANGRTGNTDKLNLESVGLQADSRGQLVVNANYQTQVEHIYAVGDVIGYPSLASAAYDQGRFVAQAIIHGQAAHLLTEDIPTGIYTIPEISSVGRTEQELTAAKVPYEVGRASFKHLARAQIAGKDIGSLKILFHRETKEILGIHCFGERAAEIIHIGQAIMEQKGEANTIEYFVNTTFNYPTMAEAFRVAALNGLNRLF</sequence>
<protein>
    <recommendedName>
        <fullName>Soluble pyridine nucleotide transhydrogenase</fullName>
        <shortName>STH</shortName>
        <ecNumber>1.6.1.1</ecNumber>
    </recommendedName>
    <alternativeName>
        <fullName>NAD(P)(+) transhydrogenase [B-specific]</fullName>
    </alternativeName>
</protein>
<accession>P50529</accession>
<organism>
    <name type="scientific">Vibrio cholerae serotype O1 (strain ATCC 39315 / El Tor Inaba N16961)</name>
    <dbReference type="NCBI Taxonomy" id="243277"/>
    <lineage>
        <taxon>Bacteria</taxon>
        <taxon>Pseudomonadati</taxon>
        <taxon>Pseudomonadota</taxon>
        <taxon>Gammaproteobacteria</taxon>
        <taxon>Vibrionales</taxon>
        <taxon>Vibrionaceae</taxon>
        <taxon>Vibrio</taxon>
    </lineage>
</organism>
<evidence type="ECO:0000250" key="1"/>
<evidence type="ECO:0000305" key="2"/>
<gene>
    <name type="primary">sthA</name>
    <name type="synonym">udhA</name>
    <name type="ordered locus">VC_0151</name>
</gene>
<feature type="chain" id="PRO_0000068075" description="Soluble pyridine nucleotide transhydrogenase">
    <location>
        <begin position="1"/>
        <end position="466"/>
    </location>
</feature>
<feature type="binding site" evidence="1">
    <location>
        <begin position="36"/>
        <end position="45"/>
    </location>
    <ligand>
        <name>FAD</name>
        <dbReference type="ChEBI" id="CHEBI:57692"/>
    </ligand>
</feature>
<name>STHA_VIBCH</name>
<dbReference type="EC" id="1.6.1.1"/>
<dbReference type="EMBL" id="AE003852">
    <property type="protein sequence ID" value="AAF93328.1"/>
    <property type="molecule type" value="Genomic_DNA"/>
</dbReference>
<dbReference type="EMBL" id="U44432">
    <property type="protein sequence ID" value="AAC45342.1"/>
    <property type="molecule type" value="Genomic_DNA"/>
</dbReference>
<dbReference type="PIR" id="E82357">
    <property type="entry name" value="E82357"/>
</dbReference>
<dbReference type="RefSeq" id="NP_229809.1">
    <property type="nucleotide sequence ID" value="NC_002505.1"/>
</dbReference>
<dbReference type="RefSeq" id="WP_000529898.1">
    <property type="nucleotide sequence ID" value="NZ_LT906614.1"/>
</dbReference>
<dbReference type="SMR" id="P50529"/>
<dbReference type="STRING" id="243277.VC_0151"/>
<dbReference type="DNASU" id="2614850"/>
<dbReference type="EnsemblBacteria" id="AAF93328">
    <property type="protein sequence ID" value="AAF93328"/>
    <property type="gene ID" value="VC_0151"/>
</dbReference>
<dbReference type="KEGG" id="vch:VC_0151"/>
<dbReference type="PATRIC" id="fig|243277.26.peg.139"/>
<dbReference type="eggNOG" id="COG1249">
    <property type="taxonomic scope" value="Bacteria"/>
</dbReference>
<dbReference type="HOGENOM" id="CLU_016755_0_0_6"/>
<dbReference type="Proteomes" id="UP000000584">
    <property type="component" value="Chromosome 1"/>
</dbReference>
<dbReference type="GO" id="GO:0005829">
    <property type="term" value="C:cytosol"/>
    <property type="evidence" value="ECO:0000318"/>
    <property type="project" value="GO_Central"/>
</dbReference>
<dbReference type="GO" id="GO:0004148">
    <property type="term" value="F:dihydrolipoyl dehydrogenase (NADH) activity"/>
    <property type="evidence" value="ECO:0000318"/>
    <property type="project" value="GO_Central"/>
</dbReference>
<dbReference type="GO" id="GO:0050660">
    <property type="term" value="F:flavin adenine dinucleotide binding"/>
    <property type="evidence" value="ECO:0000318"/>
    <property type="project" value="GO_Central"/>
</dbReference>
<dbReference type="GO" id="GO:0003957">
    <property type="term" value="F:NAD(P)+ transhydrogenase (Si-specific) activity"/>
    <property type="evidence" value="ECO:0007669"/>
    <property type="project" value="UniProtKB-UniRule"/>
</dbReference>
<dbReference type="GO" id="GO:0006103">
    <property type="term" value="P:2-oxoglutarate metabolic process"/>
    <property type="evidence" value="ECO:0000318"/>
    <property type="project" value="GO_Central"/>
</dbReference>
<dbReference type="GO" id="GO:0006739">
    <property type="term" value="P:NADP metabolic process"/>
    <property type="evidence" value="ECO:0007669"/>
    <property type="project" value="UniProtKB-UniRule"/>
</dbReference>
<dbReference type="GO" id="GO:0006090">
    <property type="term" value="P:pyruvate metabolic process"/>
    <property type="evidence" value="ECO:0000318"/>
    <property type="project" value="GO_Central"/>
</dbReference>
<dbReference type="FunFam" id="3.30.390.30:FF:000002">
    <property type="entry name" value="Soluble pyridine nucleotide transhydrogenase"/>
    <property type="match status" value="1"/>
</dbReference>
<dbReference type="FunFam" id="3.50.50.60:FF:000008">
    <property type="entry name" value="Soluble pyridine nucleotide transhydrogenase"/>
    <property type="match status" value="1"/>
</dbReference>
<dbReference type="Gene3D" id="3.30.390.30">
    <property type="match status" value="1"/>
</dbReference>
<dbReference type="Gene3D" id="3.50.50.60">
    <property type="entry name" value="FAD/NAD(P)-binding domain"/>
    <property type="match status" value="2"/>
</dbReference>
<dbReference type="HAMAP" id="MF_00247">
    <property type="entry name" value="SthA"/>
    <property type="match status" value="1"/>
</dbReference>
<dbReference type="InterPro" id="IPR050151">
    <property type="entry name" value="Class-I_Pyr_Nuc-Dis_Oxidored"/>
</dbReference>
<dbReference type="InterPro" id="IPR036188">
    <property type="entry name" value="FAD/NAD-bd_sf"/>
</dbReference>
<dbReference type="InterPro" id="IPR023753">
    <property type="entry name" value="FAD/NAD-binding_dom"/>
</dbReference>
<dbReference type="InterPro" id="IPR016156">
    <property type="entry name" value="FAD/NAD-linked_Rdtase_dimer_sf"/>
</dbReference>
<dbReference type="InterPro" id="IPR001100">
    <property type="entry name" value="Pyr_nuc-diS_OxRdtase"/>
</dbReference>
<dbReference type="InterPro" id="IPR004099">
    <property type="entry name" value="Pyr_nucl-diS_OxRdtase_dimer"/>
</dbReference>
<dbReference type="InterPro" id="IPR022962">
    <property type="entry name" value="STH_gammaproteobact"/>
</dbReference>
<dbReference type="NCBIfam" id="NF003585">
    <property type="entry name" value="PRK05249.1"/>
    <property type="match status" value="1"/>
</dbReference>
<dbReference type="PANTHER" id="PTHR22912">
    <property type="entry name" value="DISULFIDE OXIDOREDUCTASE"/>
    <property type="match status" value="1"/>
</dbReference>
<dbReference type="PANTHER" id="PTHR22912:SF93">
    <property type="entry name" value="SOLUBLE PYRIDINE NUCLEOTIDE TRANSHYDROGENASE"/>
    <property type="match status" value="1"/>
</dbReference>
<dbReference type="Pfam" id="PF07992">
    <property type="entry name" value="Pyr_redox_2"/>
    <property type="match status" value="1"/>
</dbReference>
<dbReference type="Pfam" id="PF02852">
    <property type="entry name" value="Pyr_redox_dim"/>
    <property type="match status" value="1"/>
</dbReference>
<dbReference type="PIRSF" id="PIRSF000350">
    <property type="entry name" value="Mercury_reductase_MerA"/>
    <property type="match status" value="1"/>
</dbReference>
<dbReference type="PRINTS" id="PR00368">
    <property type="entry name" value="FADPNR"/>
</dbReference>
<dbReference type="PRINTS" id="PR00411">
    <property type="entry name" value="PNDRDTASEI"/>
</dbReference>
<dbReference type="SUPFAM" id="SSF51905">
    <property type="entry name" value="FAD/NAD(P)-binding domain"/>
    <property type="match status" value="1"/>
</dbReference>
<dbReference type="SUPFAM" id="SSF55424">
    <property type="entry name" value="FAD/NAD-linked reductases, dimerisation (C-terminal) domain"/>
    <property type="match status" value="1"/>
</dbReference>
<reference key="1">
    <citation type="journal article" date="2000" name="Nature">
        <title>DNA sequence of both chromosomes of the cholera pathogen Vibrio cholerae.</title>
        <authorList>
            <person name="Heidelberg J.F."/>
            <person name="Eisen J.A."/>
            <person name="Nelson W.C."/>
            <person name="Clayton R.A."/>
            <person name="Gwinn M.L."/>
            <person name="Dodson R.J."/>
            <person name="Haft D.H."/>
            <person name="Hickey E.K."/>
            <person name="Peterson J.D."/>
            <person name="Umayam L.A."/>
            <person name="Gill S.R."/>
            <person name="Nelson K.E."/>
            <person name="Read T.D."/>
            <person name="Tettelin H."/>
            <person name="Richardson D.L."/>
            <person name="Ermolaeva M.D."/>
            <person name="Vamathevan J.J."/>
            <person name="Bass S."/>
            <person name="Qin H."/>
            <person name="Dragoi I."/>
            <person name="Sellers P."/>
            <person name="McDonald L.A."/>
            <person name="Utterback T.R."/>
            <person name="Fleischmann R.D."/>
            <person name="Nierman W.C."/>
            <person name="White O."/>
            <person name="Salzberg S.L."/>
            <person name="Smith H.O."/>
            <person name="Colwell R.R."/>
            <person name="Mekalanos J.J."/>
            <person name="Venter J.C."/>
            <person name="Fraser C.M."/>
        </authorList>
    </citation>
    <scope>NUCLEOTIDE SEQUENCE [LARGE SCALE GENOMIC DNA]</scope>
    <source>
        <strain>ATCC 39315 / El Tor Inaba N16961</strain>
    </source>
</reference>
<reference key="2">
    <citation type="journal article" date="1997" name="Gene">
        <title>The rpoH gene encoding sigma 32 homolog of Vibrio cholerae.</title>
        <authorList>
            <person name="Sahu G.K."/>
            <person name="Chowdhury R."/>
            <person name="Das J."/>
        </authorList>
    </citation>
    <scope>NUCLEOTIDE SEQUENCE [GENOMIC DNA] OF 421-466</scope>
    <source>
        <strain>ATCC 25870 / Classical Inaba 569B / Serotype O1</strain>
    </source>
</reference>
<proteinExistence type="inferred from homology"/>
<keyword id="KW-0963">Cytoplasm</keyword>
<keyword id="KW-0274">FAD</keyword>
<keyword id="KW-0285">Flavoprotein</keyword>
<keyword id="KW-0520">NAD</keyword>
<keyword id="KW-0521">NADP</keyword>
<keyword id="KW-0560">Oxidoreductase</keyword>
<keyword id="KW-1185">Reference proteome</keyword>
<comment type="function">
    <text evidence="1">Conversion of NADPH, generated by peripheral catabolic pathways, to NADH, which can enter the respiratory chain for energy generation.</text>
</comment>
<comment type="catalytic activity">
    <reaction>
        <text>NAD(+) + NADPH = NADH + NADP(+)</text>
        <dbReference type="Rhea" id="RHEA:11692"/>
        <dbReference type="ChEBI" id="CHEBI:57540"/>
        <dbReference type="ChEBI" id="CHEBI:57783"/>
        <dbReference type="ChEBI" id="CHEBI:57945"/>
        <dbReference type="ChEBI" id="CHEBI:58349"/>
        <dbReference type="EC" id="1.6.1.1"/>
    </reaction>
</comment>
<comment type="cofactor">
    <cofactor evidence="1">
        <name>FAD</name>
        <dbReference type="ChEBI" id="CHEBI:57692"/>
    </cofactor>
    <text evidence="1">Binds 1 FAD per subunit.</text>
</comment>
<comment type="subcellular location">
    <subcellularLocation>
        <location evidence="1">Cytoplasm</location>
    </subcellularLocation>
</comment>
<comment type="similarity">
    <text evidence="2">Belongs to the class-I pyridine nucleotide-disulfide oxidoreductase family.</text>
</comment>